<evidence type="ECO:0000250" key="1"/>
<evidence type="ECO:0000250" key="2">
    <source>
        <dbReference type="UniProtKB" id="P48201"/>
    </source>
</evidence>
<evidence type="ECO:0000255" key="3"/>
<evidence type="ECO:0000305" key="4"/>
<accession>Q3ZC75</accession>
<organism>
    <name type="scientific">Bos taurus</name>
    <name type="common">Bovine</name>
    <dbReference type="NCBI Taxonomy" id="9913"/>
    <lineage>
        <taxon>Eukaryota</taxon>
        <taxon>Metazoa</taxon>
        <taxon>Chordata</taxon>
        <taxon>Craniata</taxon>
        <taxon>Vertebrata</taxon>
        <taxon>Euteleostomi</taxon>
        <taxon>Mammalia</taxon>
        <taxon>Eutheria</taxon>
        <taxon>Laurasiatheria</taxon>
        <taxon>Artiodactyla</taxon>
        <taxon>Ruminantia</taxon>
        <taxon>Pecora</taxon>
        <taxon>Bovidae</taxon>
        <taxon>Bovinae</taxon>
        <taxon>Bos</taxon>
    </lineage>
</organism>
<gene>
    <name evidence="2" type="primary">ATP5MC3</name>
    <name type="synonym">ATP5G3</name>
</gene>
<proteinExistence type="evidence at transcript level"/>
<dbReference type="EMBL" id="BC102868">
    <property type="protein sequence ID" value="AAI02869.1"/>
    <property type="molecule type" value="mRNA"/>
</dbReference>
<dbReference type="RefSeq" id="NP_001029864.1">
    <property type="nucleotide sequence ID" value="NM_001034692.2"/>
</dbReference>
<dbReference type="SMR" id="Q3ZC75"/>
<dbReference type="FunCoup" id="Q3ZC75">
    <property type="interactions" value="888"/>
</dbReference>
<dbReference type="IntAct" id="Q3ZC75">
    <property type="interactions" value="1"/>
</dbReference>
<dbReference type="MINT" id="Q3ZC75"/>
<dbReference type="STRING" id="9913.ENSBTAP00000003832"/>
<dbReference type="PaxDb" id="9913-ENSBTAP00000003832"/>
<dbReference type="Ensembl" id="ENSBTAT00000003832.4">
    <property type="protein sequence ID" value="ENSBTAP00000003832.2"/>
    <property type="gene ID" value="ENSBTAG00000002944.4"/>
</dbReference>
<dbReference type="GeneID" id="540176"/>
<dbReference type="KEGG" id="bta:540176"/>
<dbReference type="CTD" id="518"/>
<dbReference type="VEuPathDB" id="HostDB:ENSBTAG00000002944"/>
<dbReference type="VGNC" id="VGNC:103016">
    <property type="gene designation" value="ATP5MC3"/>
</dbReference>
<dbReference type="eggNOG" id="KOG3025">
    <property type="taxonomic scope" value="Eukaryota"/>
</dbReference>
<dbReference type="GeneTree" id="ENSGT00940000154298"/>
<dbReference type="HOGENOM" id="CLU_116822_1_0_1"/>
<dbReference type="InParanoid" id="Q3ZC75"/>
<dbReference type="OMA" id="PAKMFAC"/>
<dbReference type="OrthoDB" id="438052at2759"/>
<dbReference type="TreeFam" id="TF300140"/>
<dbReference type="Reactome" id="R-BTA-1268020">
    <property type="pathway name" value="Mitochondrial protein import"/>
</dbReference>
<dbReference type="Reactome" id="R-BTA-163210">
    <property type="pathway name" value="Formation of ATP by chemiosmotic coupling"/>
</dbReference>
<dbReference type="Reactome" id="R-BTA-8949613">
    <property type="pathway name" value="Cristae formation"/>
</dbReference>
<dbReference type="Proteomes" id="UP000009136">
    <property type="component" value="Chromosome 2"/>
</dbReference>
<dbReference type="Bgee" id="ENSBTAG00000002944">
    <property type="expression patterns" value="Expressed in cardiac ventricle and 104 other cell types or tissues"/>
</dbReference>
<dbReference type="GO" id="GO:0031966">
    <property type="term" value="C:mitochondrial membrane"/>
    <property type="evidence" value="ECO:0007669"/>
    <property type="project" value="UniProtKB-SubCell"/>
</dbReference>
<dbReference type="GO" id="GO:0005739">
    <property type="term" value="C:mitochondrion"/>
    <property type="evidence" value="ECO:0000305"/>
    <property type="project" value="UniProtKB"/>
</dbReference>
<dbReference type="GO" id="GO:0045259">
    <property type="term" value="C:proton-transporting ATP synthase complex"/>
    <property type="evidence" value="ECO:0000314"/>
    <property type="project" value="UniProtKB"/>
</dbReference>
<dbReference type="GO" id="GO:0033177">
    <property type="term" value="C:proton-transporting two-sector ATPase complex, proton-transporting domain"/>
    <property type="evidence" value="ECO:0007669"/>
    <property type="project" value="InterPro"/>
</dbReference>
<dbReference type="GO" id="GO:0008289">
    <property type="term" value="F:lipid binding"/>
    <property type="evidence" value="ECO:0007669"/>
    <property type="project" value="UniProtKB-KW"/>
</dbReference>
<dbReference type="GO" id="GO:0015078">
    <property type="term" value="F:proton transmembrane transporter activity"/>
    <property type="evidence" value="ECO:0007669"/>
    <property type="project" value="InterPro"/>
</dbReference>
<dbReference type="GO" id="GO:0015986">
    <property type="term" value="P:proton motive force-driven ATP synthesis"/>
    <property type="evidence" value="ECO:0000318"/>
    <property type="project" value="GO_Central"/>
</dbReference>
<dbReference type="CDD" id="cd18182">
    <property type="entry name" value="ATP-synt_Fo_c_ATP5G3"/>
    <property type="match status" value="1"/>
</dbReference>
<dbReference type="FunFam" id="1.20.20.10:FF:000003">
    <property type="entry name" value="Atp synthase f complex subunit mitochondrial"/>
    <property type="match status" value="1"/>
</dbReference>
<dbReference type="Gene3D" id="1.20.20.10">
    <property type="entry name" value="F1F0 ATP synthase subunit C"/>
    <property type="match status" value="1"/>
</dbReference>
<dbReference type="HAMAP" id="MF_01396">
    <property type="entry name" value="ATP_synth_c_bact"/>
    <property type="match status" value="1"/>
</dbReference>
<dbReference type="InterPro" id="IPR000454">
    <property type="entry name" value="ATP_synth_F0_csu"/>
</dbReference>
<dbReference type="InterPro" id="IPR020537">
    <property type="entry name" value="ATP_synth_F0_csu_DDCD_BS"/>
</dbReference>
<dbReference type="InterPro" id="IPR038662">
    <property type="entry name" value="ATP_synth_F0_csu_sf"/>
</dbReference>
<dbReference type="InterPro" id="IPR002379">
    <property type="entry name" value="ATPase_proteolipid_c-like_dom"/>
</dbReference>
<dbReference type="InterPro" id="IPR035921">
    <property type="entry name" value="F/V-ATP_Csub_sf"/>
</dbReference>
<dbReference type="PANTHER" id="PTHR10031:SF32">
    <property type="entry name" value="ATP SYNTHASE LIPID-BINDING PROTEIN"/>
    <property type="match status" value="1"/>
</dbReference>
<dbReference type="PANTHER" id="PTHR10031">
    <property type="entry name" value="ATP SYNTHASE LIPID-BINDING PROTEIN, MITOCHONDRIAL"/>
    <property type="match status" value="1"/>
</dbReference>
<dbReference type="Pfam" id="PF00137">
    <property type="entry name" value="ATP-synt_C"/>
    <property type="match status" value="1"/>
</dbReference>
<dbReference type="PRINTS" id="PR00124">
    <property type="entry name" value="ATPASEC"/>
</dbReference>
<dbReference type="SUPFAM" id="SSF81333">
    <property type="entry name" value="F1F0 ATP synthase subunit C"/>
    <property type="match status" value="1"/>
</dbReference>
<dbReference type="PROSITE" id="PS00605">
    <property type="entry name" value="ATPASE_C"/>
    <property type="match status" value="1"/>
</dbReference>
<name>AT5G3_BOVIN</name>
<protein>
    <recommendedName>
        <fullName evidence="4">ATP synthase F(0) complex subunit C3, mitochondrial</fullName>
    </recommendedName>
    <alternativeName>
        <fullName>ATP synthase lipid-binding protein</fullName>
    </alternativeName>
    <alternativeName>
        <fullName evidence="2">ATP synthase membrane subunit c locus 3</fullName>
    </alternativeName>
    <alternativeName>
        <fullName>ATP synthase proteolipid P3</fullName>
    </alternativeName>
    <alternativeName>
        <fullName>ATPase protein 9</fullName>
    </alternativeName>
    <alternativeName>
        <fullName>ATPase subunit c</fullName>
    </alternativeName>
</protein>
<comment type="function">
    <text>Mitochondrial membrane ATP synthase (F(1)F(0) ATP synthase or Complex V) produces ATP from ADP in the presence of a proton gradient across the membrane which is generated by electron transport complexes of the respiratory chain. F-type ATPases consist of two structural domains, F(1) - containing the extramembraneous catalytic core and F(0) - containing the membrane proton channel, linked together by a central stalk and a peripheral stalk. During catalysis, ATP synthesis in the catalytic domain of F(1) is coupled via a rotary mechanism of the central stalk subunits to proton translocation. Part of the complex F(0) domain. A homomeric c-ring of probably 10 subunits is part of the complex rotary element.</text>
</comment>
<comment type="subunit">
    <text evidence="1 2">F-type ATPases have 2 components, CF(1) - the catalytic core - and CF(0) - the membrane proton channel. CF(1) has five subunits: alpha(3), beta(3), gamma(1), delta(1), epsilon(1). CF(0) has three main subunits: a, b and c (By similarity). Interacts with TMEM70 and TMEM242 (By similarity).</text>
</comment>
<comment type="subcellular location">
    <subcellularLocation>
        <location evidence="1">Mitochondrion membrane</location>
        <topology evidence="1">Multi-pass membrane protein</topology>
    </subcellularLocation>
</comment>
<comment type="PTM">
    <text evidence="2">Trimethylated by ATPSCKMT at Lys-109. Methylation is required for proper incorporation of the C subunit into the ATP synthase complex and mitochondrial respiration.</text>
</comment>
<comment type="disease">
    <text>This protein is the major protein stored in the storage bodies of animals or humans affected with ceroid lipofuscinosis (Batten disease).</text>
</comment>
<comment type="miscellaneous">
    <text>There are three genes which encode the mitochondrial ATP synthase proteolipid and they specify precursors with different import sequences but identical mature proteins.</text>
</comment>
<comment type="similarity">
    <text evidence="4">Belongs to the ATPase C chain family.</text>
</comment>
<feature type="transit peptide" description="Mitochondrion" evidence="1">
    <location>
        <begin position="1"/>
        <end position="66"/>
    </location>
</feature>
<feature type="chain" id="PRO_0000244612" description="ATP synthase F(0) complex subunit C3, mitochondrial">
    <location>
        <begin position="67"/>
        <end position="141"/>
    </location>
</feature>
<feature type="transmembrane region" description="Helical" evidence="3">
    <location>
        <begin position="82"/>
        <end position="102"/>
    </location>
</feature>
<feature type="transmembrane region" description="Helical" evidence="3">
    <location>
        <begin position="117"/>
        <end position="137"/>
    </location>
</feature>
<feature type="site" description="Reversibly protonated during proton transport" evidence="1">
    <location>
        <position position="124"/>
    </location>
</feature>
<feature type="modified residue" description="N6,N6,N6-trimethyllysine" evidence="2">
    <location>
        <position position="109"/>
    </location>
</feature>
<keyword id="KW-0138">CF(0)</keyword>
<keyword id="KW-0375">Hydrogen ion transport</keyword>
<keyword id="KW-0406">Ion transport</keyword>
<keyword id="KW-0446">Lipid-binding</keyword>
<keyword id="KW-0472">Membrane</keyword>
<keyword id="KW-0488">Methylation</keyword>
<keyword id="KW-0496">Mitochondrion</keyword>
<keyword id="KW-1185">Reference proteome</keyword>
<keyword id="KW-0809">Transit peptide</keyword>
<keyword id="KW-0812">Transmembrane</keyword>
<keyword id="KW-1133">Transmembrane helix</keyword>
<keyword id="KW-0813">Transport</keyword>
<reference key="1">
    <citation type="submission" date="2005-08" db="EMBL/GenBank/DDBJ databases">
        <authorList>
            <consortium name="NIH - Mammalian Gene Collection (MGC) project"/>
        </authorList>
    </citation>
    <scope>NUCLEOTIDE SEQUENCE [LARGE SCALE MRNA]</scope>
    <source>
        <strain>Crossbred X Angus</strain>
        <tissue>Ileum</tissue>
    </source>
</reference>
<sequence length="141" mass="14693">MFACAKLACTPALIRAGSRVAYRPISASVLSRPETRTGEGCTVFNGTQNGVSQLIQREFQTTAVNRDIDTAAKFIGAGAATVGVAGSGAGIGTVFGSLIIGYARNPSLKQQLFSYAILGFALSEAMGLFCLMVAFLILFAM</sequence>